<keyword id="KW-0413">Isomerase</keyword>
<feature type="chain" id="PRO_1000097661" description="Ribose-5-phosphate isomerase A">
    <location>
        <begin position="1"/>
        <end position="219"/>
    </location>
</feature>
<feature type="active site" description="Proton acceptor" evidence="1">
    <location>
        <position position="103"/>
    </location>
</feature>
<feature type="binding site" evidence="1">
    <location>
        <begin position="28"/>
        <end position="31"/>
    </location>
    <ligand>
        <name>substrate</name>
    </ligand>
</feature>
<feature type="binding site" evidence="1">
    <location>
        <begin position="81"/>
        <end position="84"/>
    </location>
    <ligand>
        <name>substrate</name>
    </ligand>
</feature>
<feature type="binding site" evidence="1">
    <location>
        <begin position="94"/>
        <end position="97"/>
    </location>
    <ligand>
        <name>substrate</name>
    </ligand>
</feature>
<feature type="binding site" evidence="1">
    <location>
        <position position="121"/>
    </location>
    <ligand>
        <name>substrate</name>
    </ligand>
</feature>
<protein>
    <recommendedName>
        <fullName evidence="1">Ribose-5-phosphate isomerase A</fullName>
        <ecNumber evidence="1">5.3.1.6</ecNumber>
    </recommendedName>
    <alternativeName>
        <fullName evidence="1">Phosphoriboisomerase A</fullName>
        <shortName evidence="1">PRI</shortName>
    </alternativeName>
</protein>
<comment type="function">
    <text evidence="1">Catalyzes the reversible conversion of ribose-5-phosphate to ribulose 5-phosphate.</text>
</comment>
<comment type="catalytic activity">
    <reaction evidence="1">
        <text>aldehydo-D-ribose 5-phosphate = D-ribulose 5-phosphate</text>
        <dbReference type="Rhea" id="RHEA:14657"/>
        <dbReference type="ChEBI" id="CHEBI:58121"/>
        <dbReference type="ChEBI" id="CHEBI:58273"/>
        <dbReference type="EC" id="5.3.1.6"/>
    </reaction>
</comment>
<comment type="pathway">
    <text evidence="1">Carbohydrate degradation; pentose phosphate pathway; D-ribose 5-phosphate from D-ribulose 5-phosphate (non-oxidative stage): step 1/1.</text>
</comment>
<comment type="subunit">
    <text evidence="1">Homodimer.</text>
</comment>
<comment type="similarity">
    <text evidence="1">Belongs to the ribose 5-phosphate isomerase family.</text>
</comment>
<dbReference type="EC" id="5.3.1.6" evidence="1"/>
<dbReference type="EMBL" id="CP000948">
    <property type="protein sequence ID" value="ACB04015.1"/>
    <property type="molecule type" value="Genomic_DNA"/>
</dbReference>
<dbReference type="RefSeq" id="WP_000189743.1">
    <property type="nucleotide sequence ID" value="NC_010473.1"/>
</dbReference>
<dbReference type="SMR" id="B1XEJ9"/>
<dbReference type="GeneID" id="93779085"/>
<dbReference type="KEGG" id="ecd:ECDH10B_3089"/>
<dbReference type="HOGENOM" id="CLU_056590_1_1_6"/>
<dbReference type="UniPathway" id="UPA00115">
    <property type="reaction ID" value="UER00412"/>
</dbReference>
<dbReference type="GO" id="GO:0005829">
    <property type="term" value="C:cytosol"/>
    <property type="evidence" value="ECO:0007669"/>
    <property type="project" value="TreeGrafter"/>
</dbReference>
<dbReference type="GO" id="GO:0004751">
    <property type="term" value="F:ribose-5-phosphate isomerase activity"/>
    <property type="evidence" value="ECO:0007669"/>
    <property type="project" value="UniProtKB-UniRule"/>
</dbReference>
<dbReference type="GO" id="GO:0006014">
    <property type="term" value="P:D-ribose metabolic process"/>
    <property type="evidence" value="ECO:0007669"/>
    <property type="project" value="TreeGrafter"/>
</dbReference>
<dbReference type="GO" id="GO:0009052">
    <property type="term" value="P:pentose-phosphate shunt, non-oxidative branch"/>
    <property type="evidence" value="ECO:0007669"/>
    <property type="project" value="UniProtKB-UniRule"/>
</dbReference>
<dbReference type="CDD" id="cd01398">
    <property type="entry name" value="RPI_A"/>
    <property type="match status" value="1"/>
</dbReference>
<dbReference type="FunFam" id="3.30.70.260:FF:000004">
    <property type="entry name" value="Ribose-5-phosphate isomerase A"/>
    <property type="match status" value="1"/>
</dbReference>
<dbReference type="FunFam" id="3.40.50.1360:FF:000001">
    <property type="entry name" value="Ribose-5-phosphate isomerase A"/>
    <property type="match status" value="1"/>
</dbReference>
<dbReference type="Gene3D" id="3.30.70.260">
    <property type="match status" value="1"/>
</dbReference>
<dbReference type="Gene3D" id="3.40.50.1360">
    <property type="match status" value="1"/>
</dbReference>
<dbReference type="HAMAP" id="MF_00170">
    <property type="entry name" value="Rib_5P_isom_A"/>
    <property type="match status" value="1"/>
</dbReference>
<dbReference type="InterPro" id="IPR037171">
    <property type="entry name" value="NagB/RpiA_transferase-like"/>
</dbReference>
<dbReference type="InterPro" id="IPR020672">
    <property type="entry name" value="Ribose5P_isomerase_typA_subgr"/>
</dbReference>
<dbReference type="InterPro" id="IPR004788">
    <property type="entry name" value="Ribose5P_isomerase_type_A"/>
</dbReference>
<dbReference type="NCBIfam" id="NF001924">
    <property type="entry name" value="PRK00702.1"/>
    <property type="match status" value="1"/>
</dbReference>
<dbReference type="NCBIfam" id="TIGR00021">
    <property type="entry name" value="rpiA"/>
    <property type="match status" value="1"/>
</dbReference>
<dbReference type="PANTHER" id="PTHR11934">
    <property type="entry name" value="RIBOSE-5-PHOSPHATE ISOMERASE"/>
    <property type="match status" value="1"/>
</dbReference>
<dbReference type="PANTHER" id="PTHR11934:SF0">
    <property type="entry name" value="RIBOSE-5-PHOSPHATE ISOMERASE"/>
    <property type="match status" value="1"/>
</dbReference>
<dbReference type="Pfam" id="PF06026">
    <property type="entry name" value="Rib_5-P_isom_A"/>
    <property type="match status" value="1"/>
</dbReference>
<dbReference type="SUPFAM" id="SSF75445">
    <property type="entry name" value="D-ribose-5-phosphate isomerase (RpiA), lid domain"/>
    <property type="match status" value="1"/>
</dbReference>
<dbReference type="SUPFAM" id="SSF100950">
    <property type="entry name" value="NagB/RpiA/CoA transferase-like"/>
    <property type="match status" value="1"/>
</dbReference>
<proteinExistence type="inferred from homology"/>
<sequence length="219" mass="22860">MTQDELKKAVGWAALQYVQPGTIVGVGTGSTAAHFIDALGTMKGQIEGAVSSSDASTEKLKSLGIHVFDLNEVDSLGIYVDGADEINGHMQMIKGGGAALTREKIIASVAEKFICIADASKQVDILGKFPLPVEVIPMARSAVARQLVKLGGRPEYRQGVVTDNGNVILDVHGMEILDPIAMENAINAIPGVVTVGLFANRGADVALIGTPDGVKTIVK</sequence>
<gene>
    <name evidence="1" type="primary">rpiA</name>
    <name type="ordered locus">ECDH10B_3089</name>
</gene>
<accession>B1XEJ9</accession>
<organism>
    <name type="scientific">Escherichia coli (strain K12 / DH10B)</name>
    <dbReference type="NCBI Taxonomy" id="316385"/>
    <lineage>
        <taxon>Bacteria</taxon>
        <taxon>Pseudomonadati</taxon>
        <taxon>Pseudomonadota</taxon>
        <taxon>Gammaproteobacteria</taxon>
        <taxon>Enterobacterales</taxon>
        <taxon>Enterobacteriaceae</taxon>
        <taxon>Escherichia</taxon>
    </lineage>
</organism>
<reference key="1">
    <citation type="journal article" date="2008" name="J. Bacteriol.">
        <title>The complete genome sequence of Escherichia coli DH10B: insights into the biology of a laboratory workhorse.</title>
        <authorList>
            <person name="Durfee T."/>
            <person name="Nelson R."/>
            <person name="Baldwin S."/>
            <person name="Plunkett G. III"/>
            <person name="Burland V."/>
            <person name="Mau B."/>
            <person name="Petrosino J.F."/>
            <person name="Qin X."/>
            <person name="Muzny D.M."/>
            <person name="Ayele M."/>
            <person name="Gibbs R.A."/>
            <person name="Csorgo B."/>
            <person name="Posfai G."/>
            <person name="Weinstock G.M."/>
            <person name="Blattner F.R."/>
        </authorList>
    </citation>
    <scope>NUCLEOTIDE SEQUENCE [LARGE SCALE GENOMIC DNA]</scope>
    <source>
        <strain>K12 / DH10B</strain>
    </source>
</reference>
<evidence type="ECO:0000255" key="1">
    <source>
        <dbReference type="HAMAP-Rule" id="MF_00170"/>
    </source>
</evidence>
<name>RPIA_ECODH</name>